<evidence type="ECO:0000255" key="1">
    <source>
        <dbReference type="HAMAP-Rule" id="MF_01321"/>
    </source>
</evidence>
<name>RPOB_CHLSY</name>
<protein>
    <recommendedName>
        <fullName evidence="1">DNA-directed RNA polymerase subunit beta</fullName>
        <shortName evidence="1">RNAP subunit beta</shortName>
        <ecNumber evidence="1">2.7.7.6</ecNumber>
    </recommendedName>
    <alternativeName>
        <fullName evidence="1">RNA polymerase subunit beta</fullName>
    </alternativeName>
    <alternativeName>
        <fullName evidence="1">Transcriptase subunit beta</fullName>
    </alternativeName>
</protein>
<sequence>MPPLIESVVLQPLIAPIDPGADGRRSRRIERRSFARIKDAIDLPLLIETQLKSFEWFKREGLRELFDEISPITDFTGKNLELHFRDYTFGEPRYDEFECRERDLTYAAPLRVRVELRILTTGEIKESEIFLGDFPIMTDNGTFVYNGAERVVVSQLIRSPGVYFKDEKEPTSGRSLHTAKLIPNRGAWLEFETNKRDVISVKVDRKRKIPVTILLRAITAWIAEENGNGRWVPDNELDKFGHNDQIIELFRHVDTVPEHPYIHATLDKDPSRNAKEALLELYKRLRPGDPPTLENARSLIESLLFSPRRYDLAKVGRYKLNKNLWERDVRRDGAKAPDLSVRVLLPRDIFRIVEQLILLNNGHGRPDDIDHLGNRRVRTVGELIQQQFRVGLLRLERVVKERMSLQDPASATPNGLINIRPVVAAMREFFGGSQLSQFMDQTNPLAELTNKRRLSALGPGGLSRDRAGFEVRDVHHSHYGRICPVETPEGPNIGLIGTMSTFARVNEMGFLETPYRKVYNSVDNVQVWKEKGILLRDVRDLRTGDLIAAKGTRVNDEIARQITIGLLRGQILREDIVDPDTDELIAEAGTEINRALAERIVELPIKHIKIRPVVSQEVDYLSADEEDRFVIVQANAPLDQHNRFLDTIVSCRFGEDFVSERVERVDYMDVSPKQVVSVSTSLIPFLEHDDANRALMGSNMQRQAVPLLRPDAPIVGTGMEYRAARDSGQVIVARRDGVVVSTTSERIVIEEDDGNQTEYRLRKFMRSNQDTCINQRPAVVRGQRVKAGDVIADSSSTDQGELALGQNVLVAYMPWEGGNFEDAILVSERLVREDIFTSIHIEKYEVEARDTKLGPEEITRDIPNVGQESLRNLDERGIIYIGAEVQPNDILVGKITPKGETDLTAEERLLRAIFGEKAREVKDSSLRVPNGVRGKVIDVKVFSRSEGAELPVGVNQTVRVLLCQKRKISAGDKMAGRHGNKGVVSRVLPIEDMPFLPDGRPVDIILNPIGVPSRMNIGQILETHLGWAAARLGFRVATPVFDGAHEDQIKDLLVQAGLPADGKVTLYDGRTGERFDNPVTVGYAYMLKLAHLVEDKIHARSTGPYSLVTQQPLGGKAQFGGQRFGEMEVWALEAYGAAYTLQEMLTVKSDDVVGRVKTYEAIVKGEPIQEAGVPESFKVLIKELQSLGLSVEVLSADEKPVELSDDLDSDIGALEGINLSGMERGEF</sequence>
<reference key="1">
    <citation type="submission" date="2009-01" db="EMBL/GenBank/DDBJ databases">
        <title>Complete sequence of Chloroflexus sp. Y-400-fl.</title>
        <authorList>
            <consortium name="US DOE Joint Genome Institute"/>
            <person name="Lucas S."/>
            <person name="Copeland A."/>
            <person name="Lapidus A."/>
            <person name="Glavina del Rio T."/>
            <person name="Dalin E."/>
            <person name="Tice H."/>
            <person name="Bruce D."/>
            <person name="Goodwin L."/>
            <person name="Pitluck S."/>
            <person name="Sims D."/>
            <person name="Kiss H."/>
            <person name="Brettin T."/>
            <person name="Detter J.C."/>
            <person name="Han C."/>
            <person name="Larimer F."/>
            <person name="Land M."/>
            <person name="Hauser L."/>
            <person name="Kyrpides N."/>
            <person name="Ovchinnikova G."/>
            <person name="Bryant D.A."/>
            <person name="Richardson P."/>
        </authorList>
    </citation>
    <scope>NUCLEOTIDE SEQUENCE [LARGE SCALE GENOMIC DNA]</scope>
    <source>
        <strain>ATCC 29364 / DSM 637 / Y-400-fl</strain>
    </source>
</reference>
<dbReference type="EC" id="2.7.7.6" evidence="1"/>
<dbReference type="EMBL" id="CP001364">
    <property type="protein sequence ID" value="ACM52372.1"/>
    <property type="molecule type" value="Genomic_DNA"/>
</dbReference>
<dbReference type="SMR" id="B9LL91"/>
<dbReference type="KEGG" id="chl:Chy400_0949"/>
<dbReference type="HOGENOM" id="CLU_000524_4_1_0"/>
<dbReference type="OrthoDB" id="9803954at2"/>
<dbReference type="GO" id="GO:0000428">
    <property type="term" value="C:DNA-directed RNA polymerase complex"/>
    <property type="evidence" value="ECO:0007669"/>
    <property type="project" value="UniProtKB-KW"/>
</dbReference>
<dbReference type="GO" id="GO:0003677">
    <property type="term" value="F:DNA binding"/>
    <property type="evidence" value="ECO:0007669"/>
    <property type="project" value="UniProtKB-UniRule"/>
</dbReference>
<dbReference type="GO" id="GO:0003899">
    <property type="term" value="F:DNA-directed RNA polymerase activity"/>
    <property type="evidence" value="ECO:0007669"/>
    <property type="project" value="UniProtKB-UniRule"/>
</dbReference>
<dbReference type="GO" id="GO:0032549">
    <property type="term" value="F:ribonucleoside binding"/>
    <property type="evidence" value="ECO:0007669"/>
    <property type="project" value="InterPro"/>
</dbReference>
<dbReference type="GO" id="GO:0006351">
    <property type="term" value="P:DNA-templated transcription"/>
    <property type="evidence" value="ECO:0007669"/>
    <property type="project" value="UniProtKB-UniRule"/>
</dbReference>
<dbReference type="CDD" id="cd12797">
    <property type="entry name" value="M23_peptidase"/>
    <property type="match status" value="1"/>
</dbReference>
<dbReference type="CDD" id="cd00653">
    <property type="entry name" value="RNA_pol_B_RPB2"/>
    <property type="match status" value="1"/>
</dbReference>
<dbReference type="FunFam" id="3.90.1800.10:FF:000001">
    <property type="entry name" value="DNA-directed RNA polymerase subunit beta"/>
    <property type="match status" value="1"/>
</dbReference>
<dbReference type="Gene3D" id="2.40.50.100">
    <property type="match status" value="1"/>
</dbReference>
<dbReference type="Gene3D" id="2.40.50.150">
    <property type="match status" value="1"/>
</dbReference>
<dbReference type="Gene3D" id="3.90.1100.10">
    <property type="match status" value="2"/>
</dbReference>
<dbReference type="Gene3D" id="2.40.270.10">
    <property type="entry name" value="DNA-directed RNA polymerase, subunit 2, domain 6"/>
    <property type="match status" value="1"/>
</dbReference>
<dbReference type="Gene3D" id="3.90.1800.10">
    <property type="entry name" value="RNA polymerase alpha subunit dimerisation domain"/>
    <property type="match status" value="1"/>
</dbReference>
<dbReference type="Gene3D" id="3.90.1110.10">
    <property type="entry name" value="RNA polymerase Rpb2, domain 2"/>
    <property type="match status" value="1"/>
</dbReference>
<dbReference type="HAMAP" id="MF_01321">
    <property type="entry name" value="RNApol_bact_RpoB"/>
    <property type="match status" value="1"/>
</dbReference>
<dbReference type="InterPro" id="IPR019462">
    <property type="entry name" value="DNA-dir_RNA_pol_bsu_external_1"/>
</dbReference>
<dbReference type="InterPro" id="IPR015712">
    <property type="entry name" value="DNA-dir_RNA_pol_su2"/>
</dbReference>
<dbReference type="InterPro" id="IPR007120">
    <property type="entry name" value="DNA-dir_RNAP_su2_dom"/>
</dbReference>
<dbReference type="InterPro" id="IPR037033">
    <property type="entry name" value="DNA-dir_RNAP_su2_hyb_sf"/>
</dbReference>
<dbReference type="InterPro" id="IPR010243">
    <property type="entry name" value="RNA_pol_bsu_bac"/>
</dbReference>
<dbReference type="InterPro" id="IPR007121">
    <property type="entry name" value="RNA_pol_bsu_CS"/>
</dbReference>
<dbReference type="InterPro" id="IPR007644">
    <property type="entry name" value="RNA_pol_bsu_protrusion"/>
</dbReference>
<dbReference type="InterPro" id="IPR007642">
    <property type="entry name" value="RNA_pol_Rpb2_2"/>
</dbReference>
<dbReference type="InterPro" id="IPR037034">
    <property type="entry name" value="RNA_pol_Rpb2_2_sf"/>
</dbReference>
<dbReference type="InterPro" id="IPR007645">
    <property type="entry name" value="RNA_pol_Rpb2_3"/>
</dbReference>
<dbReference type="InterPro" id="IPR007641">
    <property type="entry name" value="RNA_pol_Rpb2_7"/>
</dbReference>
<dbReference type="InterPro" id="IPR014724">
    <property type="entry name" value="RNA_pol_RPB2_OB-fold"/>
</dbReference>
<dbReference type="NCBIfam" id="NF001616">
    <property type="entry name" value="PRK00405.1"/>
    <property type="match status" value="1"/>
</dbReference>
<dbReference type="PANTHER" id="PTHR20856">
    <property type="entry name" value="DNA-DIRECTED RNA POLYMERASE I SUBUNIT 2"/>
    <property type="match status" value="1"/>
</dbReference>
<dbReference type="Pfam" id="PF04563">
    <property type="entry name" value="RNA_pol_Rpb2_1"/>
    <property type="match status" value="1"/>
</dbReference>
<dbReference type="Pfam" id="PF04561">
    <property type="entry name" value="RNA_pol_Rpb2_2"/>
    <property type="match status" value="2"/>
</dbReference>
<dbReference type="Pfam" id="PF04565">
    <property type="entry name" value="RNA_pol_Rpb2_3"/>
    <property type="match status" value="1"/>
</dbReference>
<dbReference type="Pfam" id="PF10385">
    <property type="entry name" value="RNA_pol_Rpb2_45"/>
    <property type="match status" value="1"/>
</dbReference>
<dbReference type="Pfam" id="PF00562">
    <property type="entry name" value="RNA_pol_Rpb2_6"/>
    <property type="match status" value="1"/>
</dbReference>
<dbReference type="Pfam" id="PF04560">
    <property type="entry name" value="RNA_pol_Rpb2_7"/>
    <property type="match status" value="1"/>
</dbReference>
<dbReference type="SUPFAM" id="SSF64484">
    <property type="entry name" value="beta and beta-prime subunits of DNA dependent RNA-polymerase"/>
    <property type="match status" value="1"/>
</dbReference>
<dbReference type="PROSITE" id="PS01166">
    <property type="entry name" value="RNA_POL_BETA"/>
    <property type="match status" value="1"/>
</dbReference>
<proteinExistence type="inferred from homology"/>
<organism>
    <name type="scientific">Chloroflexus aurantiacus (strain ATCC 29364 / DSM 637 / Y-400-fl)</name>
    <dbReference type="NCBI Taxonomy" id="480224"/>
    <lineage>
        <taxon>Bacteria</taxon>
        <taxon>Bacillati</taxon>
        <taxon>Chloroflexota</taxon>
        <taxon>Chloroflexia</taxon>
        <taxon>Chloroflexales</taxon>
        <taxon>Chloroflexineae</taxon>
        <taxon>Chloroflexaceae</taxon>
        <taxon>Chloroflexus</taxon>
    </lineage>
</organism>
<comment type="function">
    <text evidence="1">DNA-dependent RNA polymerase catalyzes the transcription of DNA into RNA using the four ribonucleoside triphosphates as substrates.</text>
</comment>
<comment type="catalytic activity">
    <reaction evidence="1">
        <text>RNA(n) + a ribonucleoside 5'-triphosphate = RNA(n+1) + diphosphate</text>
        <dbReference type="Rhea" id="RHEA:21248"/>
        <dbReference type="Rhea" id="RHEA-COMP:14527"/>
        <dbReference type="Rhea" id="RHEA-COMP:17342"/>
        <dbReference type="ChEBI" id="CHEBI:33019"/>
        <dbReference type="ChEBI" id="CHEBI:61557"/>
        <dbReference type="ChEBI" id="CHEBI:140395"/>
        <dbReference type="EC" id="2.7.7.6"/>
    </reaction>
</comment>
<comment type="subunit">
    <text evidence="1">The RNAP catalytic core consists of 2 alpha, 1 beta, 1 beta' and 1 omega subunit. When a sigma factor is associated with the core the holoenzyme is formed, which can initiate transcription.</text>
</comment>
<comment type="similarity">
    <text evidence="1">Belongs to the RNA polymerase beta chain family.</text>
</comment>
<gene>
    <name evidence="1" type="primary">rpoB</name>
    <name type="ordered locus">Chy400_0949</name>
</gene>
<accession>B9LL91</accession>
<keyword id="KW-0240">DNA-directed RNA polymerase</keyword>
<keyword id="KW-0548">Nucleotidyltransferase</keyword>
<keyword id="KW-0804">Transcription</keyword>
<keyword id="KW-0808">Transferase</keyword>
<feature type="chain" id="PRO_1000165799" description="DNA-directed RNA polymerase subunit beta">
    <location>
        <begin position="1"/>
        <end position="1227"/>
    </location>
</feature>